<protein>
    <recommendedName>
        <fullName evidence="1">Bifunctional protein FolD</fullName>
    </recommendedName>
    <domain>
        <recommendedName>
            <fullName evidence="1">Methylenetetrahydrofolate dehydrogenase</fullName>
            <ecNumber evidence="1">1.5.1.5</ecNumber>
        </recommendedName>
    </domain>
    <domain>
        <recommendedName>
            <fullName evidence="1">Methenyltetrahydrofolate cyclohydrolase</fullName>
            <ecNumber evidence="1">3.5.4.9</ecNumber>
        </recommendedName>
    </domain>
</protein>
<sequence length="299" mass="31231">MAQLIDGKKLAEDVVSTVKTETEKLVAATGVVPGIAVVIVGEDPASQVYVASKSRKAKECGFHSVQHDLPETASEQELLNLIEGLNNDPAIHGILVQLPLPGHIDSGRVIQTIAPEKDVDGFHFINVGKLGTGEVETAFVPCTPAGAMIMIERVHGRDLSGLNAVVIGRSNIVGKPMFNLLLAANATVTVAHSRTKDLPAIARNADILVAAVGRPQMVKGDWVKPGATVIDVGINRIPAPERGEGKTRLVGDVDFAEAEKVAGAITPVPGGVGPMTIAMLMANTLTAACRSAGMKKPVF</sequence>
<keyword id="KW-0028">Amino-acid biosynthesis</keyword>
<keyword id="KW-0368">Histidine biosynthesis</keyword>
<keyword id="KW-0378">Hydrolase</keyword>
<keyword id="KW-0486">Methionine biosynthesis</keyword>
<keyword id="KW-0511">Multifunctional enzyme</keyword>
<keyword id="KW-0521">NADP</keyword>
<keyword id="KW-0554">One-carbon metabolism</keyword>
<keyword id="KW-0560">Oxidoreductase</keyword>
<keyword id="KW-0658">Purine biosynthesis</keyword>
<accession>Q8FVP6</accession>
<accession>G0KDE9</accession>
<feature type="chain" id="PRO_0000268296" description="Bifunctional protein FolD">
    <location>
        <begin position="1"/>
        <end position="299"/>
    </location>
</feature>
<feature type="binding site" evidence="1">
    <location>
        <begin position="168"/>
        <end position="170"/>
    </location>
    <ligand>
        <name>NADP(+)</name>
        <dbReference type="ChEBI" id="CHEBI:58349"/>
    </ligand>
</feature>
<feature type="binding site" evidence="1">
    <location>
        <position position="193"/>
    </location>
    <ligand>
        <name>NADP(+)</name>
        <dbReference type="ChEBI" id="CHEBI:58349"/>
    </ligand>
</feature>
<feature type="binding site" evidence="1">
    <location>
        <position position="234"/>
    </location>
    <ligand>
        <name>NADP(+)</name>
        <dbReference type="ChEBI" id="CHEBI:58349"/>
    </ligand>
</feature>
<gene>
    <name evidence="1" type="primary">folD</name>
    <name type="ordered locus">BRA0781</name>
    <name type="ordered locus">BS1330_II0774</name>
</gene>
<name>FOLD_BRUSU</name>
<reference key="1">
    <citation type="journal article" date="2002" name="Proc. Natl. Acad. Sci. U.S.A.">
        <title>The Brucella suis genome reveals fundamental similarities between animal and plant pathogens and symbionts.</title>
        <authorList>
            <person name="Paulsen I.T."/>
            <person name="Seshadri R."/>
            <person name="Nelson K.E."/>
            <person name="Eisen J.A."/>
            <person name="Heidelberg J.F."/>
            <person name="Read T.D."/>
            <person name="Dodson R.J."/>
            <person name="Umayam L.A."/>
            <person name="Brinkac L.M."/>
            <person name="Beanan M.J."/>
            <person name="Daugherty S.C."/>
            <person name="DeBoy R.T."/>
            <person name="Durkin A.S."/>
            <person name="Kolonay J.F."/>
            <person name="Madupu R."/>
            <person name="Nelson W.C."/>
            <person name="Ayodeji B."/>
            <person name="Kraul M."/>
            <person name="Shetty J."/>
            <person name="Malek J.A."/>
            <person name="Van Aken S.E."/>
            <person name="Riedmuller S."/>
            <person name="Tettelin H."/>
            <person name="Gill S.R."/>
            <person name="White O."/>
            <person name="Salzberg S.L."/>
            <person name="Hoover D.L."/>
            <person name="Lindler L.E."/>
            <person name="Halling S.M."/>
            <person name="Boyle S.M."/>
            <person name="Fraser C.M."/>
        </authorList>
    </citation>
    <scope>NUCLEOTIDE SEQUENCE [LARGE SCALE GENOMIC DNA]</scope>
    <source>
        <strain>1330</strain>
    </source>
</reference>
<reference key="2">
    <citation type="journal article" date="2011" name="J. Bacteriol.">
        <title>Revised genome sequence of Brucella suis 1330.</title>
        <authorList>
            <person name="Tae H."/>
            <person name="Shallom S."/>
            <person name="Settlage R."/>
            <person name="Preston D."/>
            <person name="Adams L.G."/>
            <person name="Garner H.R."/>
        </authorList>
    </citation>
    <scope>NUCLEOTIDE SEQUENCE [LARGE SCALE GENOMIC DNA]</scope>
    <source>
        <strain>1330</strain>
    </source>
</reference>
<evidence type="ECO:0000255" key="1">
    <source>
        <dbReference type="HAMAP-Rule" id="MF_01576"/>
    </source>
</evidence>
<organism>
    <name type="scientific">Brucella suis biovar 1 (strain 1330)</name>
    <dbReference type="NCBI Taxonomy" id="204722"/>
    <lineage>
        <taxon>Bacteria</taxon>
        <taxon>Pseudomonadati</taxon>
        <taxon>Pseudomonadota</taxon>
        <taxon>Alphaproteobacteria</taxon>
        <taxon>Hyphomicrobiales</taxon>
        <taxon>Brucellaceae</taxon>
        <taxon>Brucella/Ochrobactrum group</taxon>
        <taxon>Brucella</taxon>
    </lineage>
</organism>
<dbReference type="EC" id="1.5.1.5" evidence="1"/>
<dbReference type="EC" id="3.5.4.9" evidence="1"/>
<dbReference type="EMBL" id="AE014292">
    <property type="protein sequence ID" value="AAN33961.1"/>
    <property type="molecule type" value="Genomic_DNA"/>
</dbReference>
<dbReference type="EMBL" id="CP002998">
    <property type="protein sequence ID" value="AEM20237.1"/>
    <property type="molecule type" value="Genomic_DNA"/>
</dbReference>
<dbReference type="RefSeq" id="WP_002967255.1">
    <property type="nucleotide sequence ID" value="NZ_KN046805.1"/>
</dbReference>
<dbReference type="SMR" id="Q8FVP6"/>
<dbReference type="GeneID" id="97535127"/>
<dbReference type="KEGG" id="bms:BRA0781"/>
<dbReference type="KEGG" id="bsi:BS1330_II0774"/>
<dbReference type="PATRIC" id="fig|204722.21.peg.1372"/>
<dbReference type="HOGENOM" id="CLU_034045_1_2_5"/>
<dbReference type="UniPathway" id="UPA00193"/>
<dbReference type="Proteomes" id="UP000007104">
    <property type="component" value="Chromosome II"/>
</dbReference>
<dbReference type="GO" id="GO:0005829">
    <property type="term" value="C:cytosol"/>
    <property type="evidence" value="ECO:0007669"/>
    <property type="project" value="TreeGrafter"/>
</dbReference>
<dbReference type="GO" id="GO:0004477">
    <property type="term" value="F:methenyltetrahydrofolate cyclohydrolase activity"/>
    <property type="evidence" value="ECO:0007669"/>
    <property type="project" value="UniProtKB-UniRule"/>
</dbReference>
<dbReference type="GO" id="GO:0004488">
    <property type="term" value="F:methylenetetrahydrofolate dehydrogenase (NADP+) activity"/>
    <property type="evidence" value="ECO:0007669"/>
    <property type="project" value="UniProtKB-UniRule"/>
</dbReference>
<dbReference type="GO" id="GO:0000105">
    <property type="term" value="P:L-histidine biosynthetic process"/>
    <property type="evidence" value="ECO:0007669"/>
    <property type="project" value="UniProtKB-KW"/>
</dbReference>
<dbReference type="GO" id="GO:0009086">
    <property type="term" value="P:methionine biosynthetic process"/>
    <property type="evidence" value="ECO:0007669"/>
    <property type="project" value="UniProtKB-KW"/>
</dbReference>
<dbReference type="GO" id="GO:0006164">
    <property type="term" value="P:purine nucleotide biosynthetic process"/>
    <property type="evidence" value="ECO:0007669"/>
    <property type="project" value="UniProtKB-KW"/>
</dbReference>
<dbReference type="GO" id="GO:0035999">
    <property type="term" value="P:tetrahydrofolate interconversion"/>
    <property type="evidence" value="ECO:0007669"/>
    <property type="project" value="UniProtKB-UniRule"/>
</dbReference>
<dbReference type="CDD" id="cd01080">
    <property type="entry name" value="NAD_bind_m-THF_DH_Cyclohyd"/>
    <property type="match status" value="1"/>
</dbReference>
<dbReference type="FunFam" id="3.40.50.720:FF:000006">
    <property type="entry name" value="Bifunctional protein FolD"/>
    <property type="match status" value="1"/>
</dbReference>
<dbReference type="FunFam" id="3.40.50.10860:FF:000005">
    <property type="entry name" value="C-1-tetrahydrofolate synthase, cytoplasmic, putative"/>
    <property type="match status" value="1"/>
</dbReference>
<dbReference type="Gene3D" id="3.40.50.10860">
    <property type="entry name" value="Leucine Dehydrogenase, chain A, domain 1"/>
    <property type="match status" value="1"/>
</dbReference>
<dbReference type="Gene3D" id="3.40.50.720">
    <property type="entry name" value="NAD(P)-binding Rossmann-like Domain"/>
    <property type="match status" value="1"/>
</dbReference>
<dbReference type="HAMAP" id="MF_01576">
    <property type="entry name" value="THF_DHG_CYH"/>
    <property type="match status" value="1"/>
</dbReference>
<dbReference type="InterPro" id="IPR046346">
    <property type="entry name" value="Aminoacid_DH-like_N_sf"/>
</dbReference>
<dbReference type="InterPro" id="IPR036291">
    <property type="entry name" value="NAD(P)-bd_dom_sf"/>
</dbReference>
<dbReference type="InterPro" id="IPR000672">
    <property type="entry name" value="THF_DH/CycHdrlase"/>
</dbReference>
<dbReference type="InterPro" id="IPR020630">
    <property type="entry name" value="THF_DH/CycHdrlase_cat_dom"/>
</dbReference>
<dbReference type="InterPro" id="IPR020867">
    <property type="entry name" value="THF_DH/CycHdrlase_CS"/>
</dbReference>
<dbReference type="InterPro" id="IPR020631">
    <property type="entry name" value="THF_DH/CycHdrlase_NAD-bd_dom"/>
</dbReference>
<dbReference type="NCBIfam" id="NF008058">
    <property type="entry name" value="PRK10792.1"/>
    <property type="match status" value="1"/>
</dbReference>
<dbReference type="NCBIfam" id="NF010783">
    <property type="entry name" value="PRK14186.1"/>
    <property type="match status" value="1"/>
</dbReference>
<dbReference type="NCBIfam" id="NF010785">
    <property type="entry name" value="PRK14188.1"/>
    <property type="match status" value="1"/>
</dbReference>
<dbReference type="PANTHER" id="PTHR48099:SF5">
    <property type="entry name" value="C-1-TETRAHYDROFOLATE SYNTHASE, CYTOPLASMIC"/>
    <property type="match status" value="1"/>
</dbReference>
<dbReference type="PANTHER" id="PTHR48099">
    <property type="entry name" value="C-1-TETRAHYDROFOLATE SYNTHASE, CYTOPLASMIC-RELATED"/>
    <property type="match status" value="1"/>
</dbReference>
<dbReference type="Pfam" id="PF00763">
    <property type="entry name" value="THF_DHG_CYH"/>
    <property type="match status" value="1"/>
</dbReference>
<dbReference type="Pfam" id="PF02882">
    <property type="entry name" value="THF_DHG_CYH_C"/>
    <property type="match status" value="1"/>
</dbReference>
<dbReference type="PRINTS" id="PR00085">
    <property type="entry name" value="THFDHDRGNASE"/>
</dbReference>
<dbReference type="SUPFAM" id="SSF53223">
    <property type="entry name" value="Aminoacid dehydrogenase-like, N-terminal domain"/>
    <property type="match status" value="1"/>
</dbReference>
<dbReference type="SUPFAM" id="SSF51735">
    <property type="entry name" value="NAD(P)-binding Rossmann-fold domains"/>
    <property type="match status" value="1"/>
</dbReference>
<dbReference type="PROSITE" id="PS00766">
    <property type="entry name" value="THF_DHG_CYH_1"/>
    <property type="match status" value="1"/>
</dbReference>
<dbReference type="PROSITE" id="PS00767">
    <property type="entry name" value="THF_DHG_CYH_2"/>
    <property type="match status" value="1"/>
</dbReference>
<comment type="function">
    <text evidence="1">Catalyzes the oxidation of 5,10-methylenetetrahydrofolate to 5,10-methenyltetrahydrofolate and then the hydrolysis of 5,10-methenyltetrahydrofolate to 10-formyltetrahydrofolate.</text>
</comment>
<comment type="catalytic activity">
    <reaction evidence="1">
        <text>(6R)-5,10-methylene-5,6,7,8-tetrahydrofolate + NADP(+) = (6R)-5,10-methenyltetrahydrofolate + NADPH</text>
        <dbReference type="Rhea" id="RHEA:22812"/>
        <dbReference type="ChEBI" id="CHEBI:15636"/>
        <dbReference type="ChEBI" id="CHEBI:57455"/>
        <dbReference type="ChEBI" id="CHEBI:57783"/>
        <dbReference type="ChEBI" id="CHEBI:58349"/>
        <dbReference type="EC" id="1.5.1.5"/>
    </reaction>
</comment>
<comment type="catalytic activity">
    <reaction evidence="1">
        <text>(6R)-5,10-methenyltetrahydrofolate + H2O = (6R)-10-formyltetrahydrofolate + H(+)</text>
        <dbReference type="Rhea" id="RHEA:23700"/>
        <dbReference type="ChEBI" id="CHEBI:15377"/>
        <dbReference type="ChEBI" id="CHEBI:15378"/>
        <dbReference type="ChEBI" id="CHEBI:57455"/>
        <dbReference type="ChEBI" id="CHEBI:195366"/>
        <dbReference type="EC" id="3.5.4.9"/>
    </reaction>
</comment>
<comment type="pathway">
    <text evidence="1">One-carbon metabolism; tetrahydrofolate interconversion.</text>
</comment>
<comment type="subunit">
    <text evidence="1">Homodimer.</text>
</comment>
<comment type="similarity">
    <text evidence="1">Belongs to the tetrahydrofolate dehydrogenase/cyclohydrolase family.</text>
</comment>
<proteinExistence type="inferred from homology"/>